<feature type="chain" id="PRO_0000058972" description="HPr kinase/phosphorylase">
    <location>
        <begin position="1"/>
        <end position="301"/>
    </location>
</feature>
<feature type="region of interest" description="Important for the catalytic mechanism of both phosphorylation and dephosphorylation" evidence="1">
    <location>
        <begin position="196"/>
        <end position="205"/>
    </location>
</feature>
<feature type="region of interest" description="Important for the catalytic mechanism of dephosphorylation" evidence="1">
    <location>
        <begin position="260"/>
        <end position="265"/>
    </location>
</feature>
<feature type="active site" evidence="1">
    <location>
        <position position="134"/>
    </location>
</feature>
<feature type="active site" evidence="1">
    <location>
        <position position="155"/>
    </location>
</feature>
<feature type="active site" description="Proton acceptor; for phosphorylation activity. Proton donor; for dephosphorylation activity" evidence="1">
    <location>
        <position position="173"/>
    </location>
</feature>
<feature type="active site" evidence="1">
    <location>
        <position position="239"/>
    </location>
</feature>
<feature type="binding site" evidence="1">
    <location>
        <begin position="149"/>
        <end position="156"/>
    </location>
    <ligand>
        <name>ATP</name>
        <dbReference type="ChEBI" id="CHEBI:30616"/>
    </ligand>
</feature>
<feature type="binding site" evidence="1">
    <location>
        <position position="156"/>
    </location>
    <ligand>
        <name>Mg(2+)</name>
        <dbReference type="ChEBI" id="CHEBI:18420"/>
    </ligand>
</feature>
<feature type="binding site" evidence="1">
    <location>
        <position position="197"/>
    </location>
    <ligand>
        <name>Mg(2+)</name>
        <dbReference type="ChEBI" id="CHEBI:18420"/>
    </ligand>
</feature>
<protein>
    <recommendedName>
        <fullName evidence="1">HPr kinase/phosphorylase</fullName>
        <shortName evidence="1">HPrK/P</shortName>
        <ecNumber evidence="1">2.7.11.-</ecNumber>
        <ecNumber evidence="1">2.7.4.-</ecNumber>
    </recommendedName>
    <alternativeName>
        <fullName evidence="1">HPr(Ser) kinase/phosphorylase</fullName>
    </alternativeName>
</protein>
<sequence length="301" mass="34426">MNWKDVHKNFSNYKLESVGREKEIISNRVTRTGLEFADFFVHKDLKAVVLWGNDEYLYLKQFDEKLVKEKIEKIFQLTPPLVVLSRSFPAKGIILELAKKYDISILSTKESSADLTNYINTFLTEKLSKKEYLHGNLIELFGLGVLLMGKSGLGKSETSIELIKHGHMFIADDAIVCSNVFNKIIGRAPKRFFGFLEVRGLGIINASRVFGIEKVKESTQINVIIELVEFDPKVHTFERLGKDLQYKEILGVKIPYYLIPITPGKKTSDMIEVIVAQLKLMLSGYNSFKEMEEKSMEDDDE</sequence>
<evidence type="ECO:0000255" key="1">
    <source>
        <dbReference type="HAMAP-Rule" id="MF_01249"/>
    </source>
</evidence>
<reference key="1">
    <citation type="journal article" date="2002" name="Nucleic Acids Res.">
        <title>The complete genomic sequence of Mycoplasma penetrans, an intracellular bacterial pathogen in humans.</title>
        <authorList>
            <person name="Sasaki Y."/>
            <person name="Ishikawa J."/>
            <person name="Yamashita A."/>
            <person name="Oshima K."/>
            <person name="Kenri T."/>
            <person name="Furuya K."/>
            <person name="Yoshino C."/>
            <person name="Horino A."/>
            <person name="Shiba T."/>
            <person name="Sasaki T."/>
            <person name="Hattori M."/>
        </authorList>
    </citation>
    <scope>NUCLEOTIDE SEQUENCE [LARGE SCALE GENOMIC DNA]</scope>
    <source>
        <strain>HF-2</strain>
    </source>
</reference>
<organism>
    <name type="scientific">Malacoplasma penetrans (strain HF-2)</name>
    <name type="common">Mycoplasma penetrans</name>
    <dbReference type="NCBI Taxonomy" id="272633"/>
    <lineage>
        <taxon>Bacteria</taxon>
        <taxon>Bacillati</taxon>
        <taxon>Mycoplasmatota</taxon>
        <taxon>Mycoplasmoidales</taxon>
        <taxon>Mycoplasmoidaceae</taxon>
        <taxon>Malacoplasma</taxon>
    </lineage>
</organism>
<keyword id="KW-0067">ATP-binding</keyword>
<keyword id="KW-0119">Carbohydrate metabolism</keyword>
<keyword id="KW-0418">Kinase</keyword>
<keyword id="KW-0460">Magnesium</keyword>
<keyword id="KW-0479">Metal-binding</keyword>
<keyword id="KW-0511">Multifunctional enzyme</keyword>
<keyword id="KW-0547">Nucleotide-binding</keyword>
<keyword id="KW-1185">Reference proteome</keyword>
<keyword id="KW-0723">Serine/threonine-protein kinase</keyword>
<keyword id="KW-0808">Transferase</keyword>
<dbReference type="EC" id="2.7.11.-" evidence="1"/>
<dbReference type="EC" id="2.7.4.-" evidence="1"/>
<dbReference type="EMBL" id="BA000026">
    <property type="protein sequence ID" value="BAC44091.1"/>
    <property type="molecule type" value="Genomic_DNA"/>
</dbReference>
<dbReference type="RefSeq" id="WP_011077127.1">
    <property type="nucleotide sequence ID" value="NC_004432.1"/>
</dbReference>
<dbReference type="SMR" id="Q8EWA5"/>
<dbReference type="FunCoup" id="Q8EWA5">
    <property type="interactions" value="1"/>
</dbReference>
<dbReference type="STRING" id="272633.gene:10731402"/>
<dbReference type="KEGG" id="mpe:MYPE2990"/>
<dbReference type="eggNOG" id="COG1493">
    <property type="taxonomic scope" value="Bacteria"/>
</dbReference>
<dbReference type="HOGENOM" id="CLU_052030_0_1_14"/>
<dbReference type="InParanoid" id="Q8EWA5"/>
<dbReference type="Proteomes" id="UP000002522">
    <property type="component" value="Chromosome"/>
</dbReference>
<dbReference type="GO" id="GO:0005524">
    <property type="term" value="F:ATP binding"/>
    <property type="evidence" value="ECO:0007669"/>
    <property type="project" value="UniProtKB-UniRule"/>
</dbReference>
<dbReference type="GO" id="GO:0000287">
    <property type="term" value="F:magnesium ion binding"/>
    <property type="evidence" value="ECO:0007669"/>
    <property type="project" value="UniProtKB-UniRule"/>
</dbReference>
<dbReference type="GO" id="GO:0000155">
    <property type="term" value="F:phosphorelay sensor kinase activity"/>
    <property type="evidence" value="ECO:0007669"/>
    <property type="project" value="InterPro"/>
</dbReference>
<dbReference type="GO" id="GO:0004674">
    <property type="term" value="F:protein serine/threonine kinase activity"/>
    <property type="evidence" value="ECO:0007669"/>
    <property type="project" value="UniProtKB-KW"/>
</dbReference>
<dbReference type="GO" id="GO:0004712">
    <property type="term" value="F:protein serine/threonine/tyrosine kinase activity"/>
    <property type="evidence" value="ECO:0007669"/>
    <property type="project" value="UniProtKB-UniRule"/>
</dbReference>
<dbReference type="GO" id="GO:0006109">
    <property type="term" value="P:regulation of carbohydrate metabolic process"/>
    <property type="evidence" value="ECO:0007669"/>
    <property type="project" value="UniProtKB-UniRule"/>
</dbReference>
<dbReference type="CDD" id="cd01918">
    <property type="entry name" value="HprK_C"/>
    <property type="match status" value="1"/>
</dbReference>
<dbReference type="Gene3D" id="3.40.1390.20">
    <property type="entry name" value="HprK N-terminal domain-like"/>
    <property type="match status" value="1"/>
</dbReference>
<dbReference type="Gene3D" id="3.40.50.300">
    <property type="entry name" value="P-loop containing nucleotide triphosphate hydrolases"/>
    <property type="match status" value="1"/>
</dbReference>
<dbReference type="HAMAP" id="MF_01249">
    <property type="entry name" value="HPr_kinase"/>
    <property type="match status" value="1"/>
</dbReference>
<dbReference type="InterPro" id="IPR003755">
    <property type="entry name" value="HPr(Ser)_kin/Pase"/>
</dbReference>
<dbReference type="InterPro" id="IPR011104">
    <property type="entry name" value="Hpr_kin/Pase_C"/>
</dbReference>
<dbReference type="InterPro" id="IPR011126">
    <property type="entry name" value="Hpr_kin/Pase_Hpr_N"/>
</dbReference>
<dbReference type="InterPro" id="IPR027417">
    <property type="entry name" value="P-loop_NTPase"/>
</dbReference>
<dbReference type="InterPro" id="IPR028979">
    <property type="entry name" value="Ser_kin/Pase_Hpr-like_N_sf"/>
</dbReference>
<dbReference type="NCBIfam" id="TIGR00679">
    <property type="entry name" value="hpr-ser"/>
    <property type="match status" value="1"/>
</dbReference>
<dbReference type="PANTHER" id="PTHR30305:SF1">
    <property type="entry name" value="HPR KINASE_PHOSPHORYLASE"/>
    <property type="match status" value="1"/>
</dbReference>
<dbReference type="PANTHER" id="PTHR30305">
    <property type="entry name" value="PROTEIN YJDM-RELATED"/>
    <property type="match status" value="1"/>
</dbReference>
<dbReference type="Pfam" id="PF07475">
    <property type="entry name" value="Hpr_kinase_C"/>
    <property type="match status" value="1"/>
</dbReference>
<dbReference type="Pfam" id="PF02603">
    <property type="entry name" value="Hpr_kinase_N"/>
    <property type="match status" value="1"/>
</dbReference>
<dbReference type="SUPFAM" id="SSF75138">
    <property type="entry name" value="HprK N-terminal domain-like"/>
    <property type="match status" value="1"/>
</dbReference>
<dbReference type="SUPFAM" id="SSF53795">
    <property type="entry name" value="PEP carboxykinase-like"/>
    <property type="match status" value="1"/>
</dbReference>
<accession>Q8EWA5</accession>
<name>HPRK_MALP2</name>
<gene>
    <name evidence="1" type="primary">hprK</name>
    <name type="ordered locus">MYPE2990</name>
</gene>
<proteinExistence type="inferred from homology"/>
<comment type="function">
    <text evidence="1">Catalyzes the ATP- as well as the pyrophosphate-dependent phosphorylation of a specific serine residue in HPr, a phosphocarrier protein of the phosphoenolpyruvate-dependent sugar phosphotransferase system (PTS). HprK/P also catalyzes the pyrophosphate-producing, inorganic phosphate-dependent dephosphorylation (phosphorolysis) of seryl-phosphorylated HPr (P-Ser-HPr). The two antagonistic activities of HprK/P are regulated by several intracellular metabolites, which change their concentration in response to the absence or presence of rapidly metabolisable carbon sources (glucose, fructose, etc.) in the growth medium. Therefore, by controlling the phosphorylation state of HPr, HPrK/P is a sensor enzyme that plays a major role in the regulation of carbon metabolism and sugar transport: it mediates carbon catabolite repression (CCR), and regulates PTS-catalyzed carbohydrate uptake and inducer exclusion.</text>
</comment>
<comment type="catalytic activity">
    <reaction evidence="1">
        <text>[HPr protein]-L-serine + ATP = [HPr protein]-O-phospho-L-serine + ADP + H(+)</text>
        <dbReference type="Rhea" id="RHEA:46600"/>
        <dbReference type="Rhea" id="RHEA-COMP:11602"/>
        <dbReference type="Rhea" id="RHEA-COMP:11603"/>
        <dbReference type="ChEBI" id="CHEBI:15378"/>
        <dbReference type="ChEBI" id="CHEBI:29999"/>
        <dbReference type="ChEBI" id="CHEBI:30616"/>
        <dbReference type="ChEBI" id="CHEBI:83421"/>
        <dbReference type="ChEBI" id="CHEBI:456216"/>
    </reaction>
</comment>
<comment type="catalytic activity">
    <reaction evidence="1">
        <text>[HPr protein]-O-phospho-L-serine + phosphate + H(+) = [HPr protein]-L-serine + diphosphate</text>
        <dbReference type="Rhea" id="RHEA:46604"/>
        <dbReference type="Rhea" id="RHEA-COMP:11602"/>
        <dbReference type="Rhea" id="RHEA-COMP:11603"/>
        <dbReference type="ChEBI" id="CHEBI:15378"/>
        <dbReference type="ChEBI" id="CHEBI:29999"/>
        <dbReference type="ChEBI" id="CHEBI:33019"/>
        <dbReference type="ChEBI" id="CHEBI:43474"/>
        <dbReference type="ChEBI" id="CHEBI:83421"/>
    </reaction>
</comment>
<comment type="cofactor">
    <cofactor evidence="1">
        <name>Mg(2+)</name>
        <dbReference type="ChEBI" id="CHEBI:18420"/>
    </cofactor>
</comment>
<comment type="subunit">
    <text evidence="1">Homohexamer.</text>
</comment>
<comment type="domain">
    <text evidence="1">The Walker A ATP-binding motif also binds Pi and PPi.</text>
</comment>
<comment type="miscellaneous">
    <text evidence="1">Both phosphorylation and phosphorolysis are carried out by the same active site and suggest a common mechanism for both reactions.</text>
</comment>
<comment type="similarity">
    <text evidence="1">Belongs to the HPrK/P family.</text>
</comment>